<name>BRI1_SOLPE</name>
<proteinExistence type="evidence at protein level"/>
<evidence type="ECO:0000250" key="1"/>
<evidence type="ECO:0000255" key="2"/>
<evidence type="ECO:0000255" key="3">
    <source>
        <dbReference type="PROSITE-ProRule" id="PRU00159"/>
    </source>
</evidence>
<evidence type="ECO:0000255" key="4">
    <source>
        <dbReference type="PROSITE-ProRule" id="PRU10027"/>
    </source>
</evidence>
<evidence type="ECO:0000269" key="5">
    <source>
    </source>
</evidence>
<comment type="function">
    <text evidence="1">Receptor with a serine/threonine-protein kinase activity. Involved in the perception of systemin, a peptide hormone responsible for the systemic activation of defense genes in leaves of wounded plants. May also regulate, in response to brassinosteroid binding, a signaling cascade involved in plant development (By similarity).</text>
</comment>
<comment type="catalytic activity">
    <reaction>
        <text>L-seryl-[protein] + ATP = O-phospho-L-seryl-[protein] + ADP + H(+)</text>
        <dbReference type="Rhea" id="RHEA:17989"/>
        <dbReference type="Rhea" id="RHEA-COMP:9863"/>
        <dbReference type="Rhea" id="RHEA-COMP:11604"/>
        <dbReference type="ChEBI" id="CHEBI:15378"/>
        <dbReference type="ChEBI" id="CHEBI:29999"/>
        <dbReference type="ChEBI" id="CHEBI:30616"/>
        <dbReference type="ChEBI" id="CHEBI:83421"/>
        <dbReference type="ChEBI" id="CHEBI:456216"/>
        <dbReference type="EC" id="2.7.11.1"/>
    </reaction>
</comment>
<comment type="catalytic activity">
    <reaction>
        <text>L-threonyl-[protein] + ATP = O-phospho-L-threonyl-[protein] + ADP + H(+)</text>
        <dbReference type="Rhea" id="RHEA:46608"/>
        <dbReference type="Rhea" id="RHEA-COMP:11060"/>
        <dbReference type="Rhea" id="RHEA-COMP:11605"/>
        <dbReference type="ChEBI" id="CHEBI:15378"/>
        <dbReference type="ChEBI" id="CHEBI:30013"/>
        <dbReference type="ChEBI" id="CHEBI:30616"/>
        <dbReference type="ChEBI" id="CHEBI:61977"/>
        <dbReference type="ChEBI" id="CHEBI:456216"/>
        <dbReference type="EC" id="2.7.11.1"/>
    </reaction>
</comment>
<comment type="subcellular location">
    <subcellularLocation>
        <location>Cell membrane</location>
        <topology>Single-pass type I membrane protein</topology>
    </subcellularLocation>
</comment>
<comment type="domain">
    <text evidence="1">A 68 amino acid island between the 20th and the 21st LRR is essential for the binding of brassinosteroids.</text>
</comment>
<comment type="PTM">
    <text evidence="5">Glycosylated.</text>
</comment>
<comment type="miscellaneous">
    <text>SR160 is almost identical to BRI1, a brassinosteroid receptor identified in Lycopersicon esculentum. Competition experiments indicate that brassinosteroid and systemin are probably perceived by different regions of the receptor.</text>
</comment>
<comment type="similarity">
    <text evidence="3">Belongs to the protein kinase superfamily. Ser/Thr protein kinase family.</text>
</comment>
<feature type="signal peptide" evidence="2">
    <location>
        <begin position="1"/>
        <end position="34"/>
    </location>
</feature>
<feature type="chain" id="PRO_0000024307" description="Systemin receptor SR160">
    <location>
        <begin position="35"/>
        <end position="1207"/>
    </location>
</feature>
<feature type="transmembrane region" description="Helical" evidence="2">
    <location>
        <begin position="803"/>
        <end position="823"/>
    </location>
</feature>
<feature type="repeat" description="LRR 1">
    <location>
        <begin position="109"/>
        <end position="131"/>
    </location>
</feature>
<feature type="repeat" description="LRR 2">
    <location>
        <begin position="135"/>
        <end position="157"/>
    </location>
</feature>
<feature type="repeat" description="LRR 3">
    <location>
        <begin position="161"/>
        <end position="181"/>
    </location>
</feature>
<feature type="repeat" description="LRR 4">
    <location>
        <begin position="186"/>
        <end position="207"/>
    </location>
</feature>
<feature type="repeat" description="LRR 5">
    <location>
        <begin position="213"/>
        <end position="234"/>
    </location>
</feature>
<feature type="repeat" description="LRR 6">
    <location>
        <begin position="235"/>
        <end position="257"/>
    </location>
</feature>
<feature type="repeat" description="LRR 7">
    <location>
        <begin position="258"/>
        <end position="280"/>
    </location>
</feature>
<feature type="repeat" description="LRR 8">
    <location>
        <begin position="282"/>
        <end position="304"/>
    </location>
</feature>
<feature type="repeat" description="LRR 9">
    <location>
        <begin position="305"/>
        <end position="325"/>
    </location>
</feature>
<feature type="repeat" description="LRR 10">
    <location>
        <begin position="329"/>
        <end position="350"/>
    </location>
</feature>
<feature type="repeat" description="LRR 11">
    <location>
        <begin position="353"/>
        <end position="375"/>
    </location>
</feature>
<feature type="repeat" description="LRR 12">
    <location>
        <begin position="378"/>
        <end position="401"/>
    </location>
</feature>
<feature type="repeat" description="LRR 13">
    <location>
        <begin position="402"/>
        <end position="423"/>
    </location>
</feature>
<feature type="repeat" description="LRR 14">
    <location>
        <begin position="428"/>
        <end position="450"/>
    </location>
</feature>
<feature type="repeat" description="LRR 15">
    <location>
        <begin position="452"/>
        <end position="474"/>
    </location>
</feature>
<feature type="repeat" description="LRR 16">
    <location>
        <begin position="476"/>
        <end position="499"/>
    </location>
</feature>
<feature type="repeat" description="LRR 17">
    <location>
        <begin position="500"/>
        <end position="523"/>
    </location>
</feature>
<feature type="repeat" description="LRR 18">
    <location>
        <begin position="524"/>
        <end position="547"/>
    </location>
</feature>
<feature type="repeat" description="LRR 19">
    <location>
        <begin position="548"/>
        <end position="570"/>
    </location>
</feature>
<feature type="repeat" description="LRR 20">
    <location>
        <begin position="572"/>
        <end position="594"/>
    </location>
</feature>
<feature type="repeat" description="LRR 21">
    <location>
        <begin position="664"/>
        <end position="686"/>
    </location>
</feature>
<feature type="repeat" description="LRR 22">
    <location>
        <begin position="688"/>
        <end position="711"/>
    </location>
</feature>
<feature type="repeat" description="LRR 23">
    <location>
        <begin position="712"/>
        <end position="735"/>
    </location>
</feature>
<feature type="repeat" description="LRR 24">
    <location>
        <begin position="736"/>
        <end position="758"/>
    </location>
</feature>
<feature type="domain" description="Protein kinase" evidence="3">
    <location>
        <begin position="888"/>
        <end position="1163"/>
    </location>
</feature>
<feature type="short sequence motif" description="Cys pair 1">
    <location>
        <begin position="71"/>
        <end position="78"/>
    </location>
</feature>
<feature type="short sequence motif" description="Cys pair 2">
    <location>
        <begin position="771"/>
        <end position="779"/>
    </location>
</feature>
<feature type="active site" description="Proton acceptor" evidence="3 4">
    <location>
        <position position="1014"/>
    </location>
</feature>
<feature type="binding site" evidence="3">
    <location>
        <begin position="894"/>
        <end position="902"/>
    </location>
    <ligand>
        <name>ATP</name>
        <dbReference type="ChEBI" id="CHEBI:30616"/>
    </ligand>
</feature>
<feature type="binding site" evidence="3">
    <location>
        <position position="916"/>
    </location>
    <ligand>
        <name>ATP</name>
        <dbReference type="ChEBI" id="CHEBI:30616"/>
    </ligand>
</feature>
<feature type="glycosylation site" description="N-linked (GlcNAc...) asparagine" evidence="2">
    <location>
        <position position="119"/>
    </location>
</feature>
<feature type="glycosylation site" description="N-linked (GlcNAc...) asparagine" evidence="2">
    <location>
        <position position="166"/>
    </location>
</feature>
<feature type="glycosylation site" description="N-linked (GlcNAc...) asparagine" evidence="2">
    <location>
        <position position="196"/>
    </location>
</feature>
<feature type="glycosylation site" description="N-linked (GlcNAc...) asparagine" evidence="2">
    <location>
        <position position="235"/>
    </location>
</feature>
<feature type="glycosylation site" description="N-linked (GlcNAc...) asparagine" evidence="2">
    <location>
        <position position="245"/>
    </location>
</feature>
<feature type="glycosylation site" description="N-linked (GlcNAc...) asparagine" evidence="2">
    <location>
        <position position="287"/>
    </location>
</feature>
<feature type="glycosylation site" description="N-linked (GlcNAc...) asparagine" evidence="2">
    <location>
        <position position="339"/>
    </location>
</feature>
<feature type="glycosylation site" description="N-linked (GlcNAc...) asparagine" evidence="2">
    <location>
        <position position="363"/>
    </location>
</feature>
<feature type="glycosylation site" description="N-linked (GlcNAc...) asparagine" evidence="2">
    <location>
        <position position="412"/>
    </location>
</feature>
<feature type="glycosylation site" description="N-linked (GlcNAc...) asparagine" evidence="2">
    <location>
        <position position="449"/>
    </location>
</feature>
<feature type="glycosylation site" description="N-linked (GlcNAc...) asparagine" evidence="2">
    <location>
        <position position="521"/>
    </location>
</feature>
<feature type="glycosylation site" description="N-linked (GlcNAc...) asparagine" evidence="2">
    <location>
        <position position="556"/>
    </location>
</feature>
<feature type="glycosylation site" description="N-linked (GlcNAc...) asparagine" evidence="2">
    <location>
        <position position="584"/>
    </location>
</feature>
<feature type="glycosylation site" description="N-linked (GlcNAc...) asparagine" evidence="2">
    <location>
        <position position="646"/>
    </location>
</feature>
<feature type="glycosylation site" description="N-linked (GlcNAc...) asparagine" evidence="2">
    <location>
        <position position="662"/>
    </location>
</feature>
<feature type="glycosylation site" description="N-linked (GlcNAc...) asparagine" evidence="2">
    <location>
        <position position="724"/>
    </location>
</feature>
<feature type="glycosylation site" description="N-linked (GlcNAc...) asparagine" evidence="2">
    <location>
        <position position="746"/>
    </location>
</feature>
<feature type="glycosylation site" description="N-linked (GlcNAc...) asparagine" evidence="2">
    <location>
        <position position="767"/>
    </location>
</feature>
<sequence>MKAHKTVFNQHPLSLNKLFFVLLLIFFLPPASPAASVNGLYKDSQQLLSFKAALPPTPTLLQNWLSSTDPCSFTGVSCKNSRVSSIDLSNTFLSVDFSLVTSYLLPLSNLESLVLKNANLSGSLTSAAKSQCGVTLDSIDLAENTISGPISDISSFGVCSNLKSLNLSKNFLDPPGKEMLKGATFSLQVLDLSYNNISGFNLFPWVSSMGFVELEFFSIKGNKLAGSIPELDFKNLSYLDLSANNFSTVFPSFKDCSNLQHLDLSSNKFYGDIGSSLSSCGKLSFLNLTNNQFVGLVPKLPSESLQYLYLRGNDFQGVYPNQLADLCKTVVELDLSYNNFSGMVPESLGECSSLELVDISNNNFSGKLPVDTLLKLSNIKTMVLSFNKFVGGLPDSFSNLPKLETLDMSSNNLTGIIPSGICKDPMNNLKVLYLQNNLFKGPIPDSLSNCSQLVSLDLSFNYLTGSIPSSLGSLSKLKDLILWLNQLSGEIPQELMYLQALENLILDFNDLTGPIPASLSNCTKLNWISLSNNQLSGEIPASLGRLSNLAILKLGNNSISGNIPAELGNCQSLIWLDLNTNFLNGSIPPPLFKQSGNIAVALLTGKRYVYIKNDGSKECHGAGNLLEFGGIRQEQLDRISTRHPCNFTRVYRGITQPTFNHNGSMIFLDLSYNKLEGSIPKELGAMYYLSILNLGHNDLSGMIPQQLGGLKNVAILDLSYNRFNGTIPNSLTSLTLLGEIDLSNNNLSGMIPESAPFDTFPDYRFANNSLCGYPLPLPCSSGPKSDANQHQKSHRRQASLAGSVAMGLLFSLFCIFGLIIVAIETKKRRRKKEAALEAYMDGHSHSATANSAWKFTSAREALSINLAAFEKPLRKLTFADLLEATNGFHNDSLVGSGGFGDVYKAQLKDGSVVAIKKLIHVSGQGDREFTAEMETIGKIKHRNLVPLLGYCKVGEERLLVYEYMKYGSLEDVLHDRKKTGIKLNWPARRKIAIGAARGLAFLHHNCIPHIIHRDMKSSNVLLDENLEARVSDFGMARLMSAMDTHLSVSTLAGTPGYVPPEYYQSFRCSTKGDVYSYGVVLLELLTGKQPTDSADFGDNNLVGWVKLHAKGKITDVFDRELLKEDASIEIELLQHLKVACACLDDRHWKRPTMIQVMAMFKEIQAGSGMDSTSTIGADDVNFSGVEGGIEMGINGSIKEGNELSKHL</sequence>
<accession>Q8L899</accession>
<dbReference type="EC" id="2.7.11.1"/>
<dbReference type="EMBL" id="AY112661">
    <property type="protein sequence ID" value="AAM48285.1"/>
    <property type="molecule type" value="mRNA"/>
</dbReference>
<dbReference type="SMR" id="Q8L899"/>
<dbReference type="GO" id="GO:0005886">
    <property type="term" value="C:plasma membrane"/>
    <property type="evidence" value="ECO:0007669"/>
    <property type="project" value="UniProtKB-SubCell"/>
</dbReference>
<dbReference type="GO" id="GO:0005524">
    <property type="term" value="F:ATP binding"/>
    <property type="evidence" value="ECO:0007669"/>
    <property type="project" value="UniProtKB-KW"/>
</dbReference>
<dbReference type="GO" id="GO:0106310">
    <property type="term" value="F:protein serine kinase activity"/>
    <property type="evidence" value="ECO:0007669"/>
    <property type="project" value="RHEA"/>
</dbReference>
<dbReference type="GO" id="GO:0004674">
    <property type="term" value="F:protein serine/threonine kinase activity"/>
    <property type="evidence" value="ECO:0007669"/>
    <property type="project" value="UniProtKB-KW"/>
</dbReference>
<dbReference type="GO" id="GO:0005496">
    <property type="term" value="F:steroid binding"/>
    <property type="evidence" value="ECO:0007669"/>
    <property type="project" value="UniProtKB-KW"/>
</dbReference>
<dbReference type="GO" id="GO:0050832">
    <property type="term" value="P:defense response to fungus"/>
    <property type="evidence" value="ECO:0007669"/>
    <property type="project" value="UniProtKB-ARBA"/>
</dbReference>
<dbReference type="CDD" id="cd14066">
    <property type="entry name" value="STKc_IRAK"/>
    <property type="match status" value="1"/>
</dbReference>
<dbReference type="FunFam" id="1.10.510.10:FF:000291">
    <property type="entry name" value="Brassinosteroid LRR receptor kinase"/>
    <property type="match status" value="1"/>
</dbReference>
<dbReference type="FunFam" id="3.80.10.10:FF:000125">
    <property type="entry name" value="Brassinosteroid LRR receptor kinase"/>
    <property type="match status" value="1"/>
</dbReference>
<dbReference type="FunFam" id="3.80.10.10:FF:000111">
    <property type="entry name" value="LRR receptor-like serine/threonine-protein kinase ERECTA"/>
    <property type="match status" value="1"/>
</dbReference>
<dbReference type="FunFam" id="3.30.1490.310:FF:000001">
    <property type="entry name" value="Serine/threonine-protein kinase BRI1-like 1"/>
    <property type="match status" value="1"/>
</dbReference>
<dbReference type="FunFam" id="3.30.200.20:FF:000150">
    <property type="entry name" value="serine/threonine-protein kinase BRI1-like 2"/>
    <property type="match status" value="1"/>
</dbReference>
<dbReference type="Gene3D" id="3.30.1490.310">
    <property type="match status" value="1"/>
</dbReference>
<dbReference type="Gene3D" id="3.30.200.20">
    <property type="entry name" value="Phosphorylase Kinase, domain 1"/>
    <property type="match status" value="1"/>
</dbReference>
<dbReference type="Gene3D" id="3.80.10.10">
    <property type="entry name" value="Ribonuclease Inhibitor"/>
    <property type="match status" value="1"/>
</dbReference>
<dbReference type="Gene3D" id="1.10.510.10">
    <property type="entry name" value="Transferase(Phosphotransferase) domain 1"/>
    <property type="match status" value="1"/>
</dbReference>
<dbReference type="InterPro" id="IPR045381">
    <property type="entry name" value="BRI1_island_dom"/>
</dbReference>
<dbReference type="InterPro" id="IPR011009">
    <property type="entry name" value="Kinase-like_dom_sf"/>
</dbReference>
<dbReference type="InterPro" id="IPR001611">
    <property type="entry name" value="Leu-rich_rpt"/>
</dbReference>
<dbReference type="InterPro" id="IPR003591">
    <property type="entry name" value="Leu-rich_rpt_typical-subtyp"/>
</dbReference>
<dbReference type="InterPro" id="IPR032675">
    <property type="entry name" value="LRR_dom_sf"/>
</dbReference>
<dbReference type="InterPro" id="IPR013210">
    <property type="entry name" value="LRR_N_plant-typ"/>
</dbReference>
<dbReference type="InterPro" id="IPR000719">
    <property type="entry name" value="Prot_kinase_dom"/>
</dbReference>
<dbReference type="InterPro" id="IPR017441">
    <property type="entry name" value="Protein_kinase_ATP_BS"/>
</dbReference>
<dbReference type="InterPro" id="IPR008271">
    <property type="entry name" value="Ser/Thr_kinase_AS"/>
</dbReference>
<dbReference type="PANTHER" id="PTHR27000">
    <property type="entry name" value="LEUCINE-RICH REPEAT RECEPTOR-LIKE PROTEIN KINASE FAMILY PROTEIN-RELATED"/>
    <property type="match status" value="1"/>
</dbReference>
<dbReference type="PANTHER" id="PTHR27000:SF800">
    <property type="entry name" value="OS11G0197000 PROTEIN"/>
    <property type="match status" value="1"/>
</dbReference>
<dbReference type="Pfam" id="PF20141">
    <property type="entry name" value="Island"/>
    <property type="match status" value="1"/>
</dbReference>
<dbReference type="Pfam" id="PF00560">
    <property type="entry name" value="LRR_1"/>
    <property type="match status" value="7"/>
</dbReference>
<dbReference type="Pfam" id="PF13855">
    <property type="entry name" value="LRR_8"/>
    <property type="match status" value="3"/>
</dbReference>
<dbReference type="Pfam" id="PF08263">
    <property type="entry name" value="LRRNT_2"/>
    <property type="match status" value="1"/>
</dbReference>
<dbReference type="Pfam" id="PF00069">
    <property type="entry name" value="Pkinase"/>
    <property type="match status" value="1"/>
</dbReference>
<dbReference type="PRINTS" id="PR00019">
    <property type="entry name" value="LEURICHRPT"/>
</dbReference>
<dbReference type="SMART" id="SM00369">
    <property type="entry name" value="LRR_TYP"/>
    <property type="match status" value="6"/>
</dbReference>
<dbReference type="SMART" id="SM00220">
    <property type="entry name" value="S_TKc"/>
    <property type="match status" value="1"/>
</dbReference>
<dbReference type="SUPFAM" id="SSF52058">
    <property type="entry name" value="L domain-like"/>
    <property type="match status" value="1"/>
</dbReference>
<dbReference type="SUPFAM" id="SSF56112">
    <property type="entry name" value="Protein kinase-like (PK-like)"/>
    <property type="match status" value="1"/>
</dbReference>
<dbReference type="SUPFAM" id="SSF52047">
    <property type="entry name" value="RNI-like"/>
    <property type="match status" value="2"/>
</dbReference>
<dbReference type="PROSITE" id="PS51450">
    <property type="entry name" value="LRR"/>
    <property type="match status" value="20"/>
</dbReference>
<dbReference type="PROSITE" id="PS00107">
    <property type="entry name" value="PROTEIN_KINASE_ATP"/>
    <property type="match status" value="1"/>
</dbReference>
<dbReference type="PROSITE" id="PS50011">
    <property type="entry name" value="PROTEIN_KINASE_DOM"/>
    <property type="match status" value="1"/>
</dbReference>
<dbReference type="PROSITE" id="PS00108">
    <property type="entry name" value="PROTEIN_KINASE_ST"/>
    <property type="match status" value="1"/>
</dbReference>
<organism>
    <name type="scientific">Solanum peruvianum</name>
    <name type="common">Peruvian tomato</name>
    <name type="synonym">Lycopersicon peruvianum</name>
    <dbReference type="NCBI Taxonomy" id="4082"/>
    <lineage>
        <taxon>Eukaryota</taxon>
        <taxon>Viridiplantae</taxon>
        <taxon>Streptophyta</taxon>
        <taxon>Embryophyta</taxon>
        <taxon>Tracheophyta</taxon>
        <taxon>Spermatophyta</taxon>
        <taxon>Magnoliopsida</taxon>
        <taxon>eudicotyledons</taxon>
        <taxon>Gunneridae</taxon>
        <taxon>Pentapetalae</taxon>
        <taxon>asterids</taxon>
        <taxon>lamiids</taxon>
        <taxon>Solanales</taxon>
        <taxon>Solanaceae</taxon>
        <taxon>Solanoideae</taxon>
        <taxon>Solaneae</taxon>
        <taxon>Solanum</taxon>
        <taxon>Solanum subgen. Lycopersicon</taxon>
    </lineage>
</organism>
<keyword id="KW-0067">ATP-binding</keyword>
<keyword id="KW-1003">Cell membrane</keyword>
<keyword id="KW-0903">Direct protein sequencing</keyword>
<keyword id="KW-0325">Glycoprotein</keyword>
<keyword id="KW-0418">Kinase</keyword>
<keyword id="KW-0433">Leucine-rich repeat</keyword>
<keyword id="KW-0446">Lipid-binding</keyword>
<keyword id="KW-0472">Membrane</keyword>
<keyword id="KW-0547">Nucleotide-binding</keyword>
<keyword id="KW-0611">Plant defense</keyword>
<keyword id="KW-0675">Receptor</keyword>
<keyword id="KW-0677">Repeat</keyword>
<keyword id="KW-0723">Serine/threonine-protein kinase</keyword>
<keyword id="KW-0732">Signal</keyword>
<keyword id="KW-0754">Steroid-binding</keyword>
<keyword id="KW-0808">Transferase</keyword>
<keyword id="KW-0812">Transmembrane</keyword>
<keyword id="KW-1133">Transmembrane helix</keyword>
<reference key="1">
    <citation type="journal article" date="2002" name="Proc. Natl. Acad. Sci. U.S.A.">
        <title>The systemin receptor SR160 from Lycopersicon peruvianum is a member of the LRR receptor kinase family.</title>
        <authorList>
            <person name="Scheer J.M."/>
            <person name="Ryan C.A. Jr."/>
        </authorList>
    </citation>
    <scope>NUCLEOTIDE SEQUENCE [MRNA]</scope>
    <scope>PROTEIN SEQUENCE OF 301-311; 432-440; 548-554 AND 862-874</scope>
    <scope>GLYCOSYLATION</scope>
    <scope>SUBSTRATE-BINDING</scope>
</reference>
<protein>
    <recommendedName>
        <fullName>Systemin receptor SR160</fullName>
        <ecNumber>2.7.11.1</ecNumber>
    </recommendedName>
    <alternativeName>
        <fullName>Brassinosteroid LRR receptor kinase</fullName>
    </alternativeName>
</protein>